<comment type="function">
    <text evidence="3">Involved in leaf vasculature patterning.</text>
</comment>
<comment type="subcellular location">
    <subcellularLocation>
        <location evidence="5">Secreted</location>
    </subcellularLocation>
</comment>
<comment type="tissue specificity">
    <text evidence="3">Expressed in emerging leaf primordia and young leaves.</text>
</comment>
<comment type="disruption phenotype">
    <text evidence="3">Defects in venation pattern in leaves and cotyledons, post-genital organ fusions in all aerial organs from organ primordia to young expanding organs and glaucous and rough leaf surface.</text>
</comment>
<organism>
    <name type="scientific">Arabidopsis thaliana</name>
    <name type="common">Mouse-ear cress</name>
    <dbReference type="NCBI Taxonomy" id="3702"/>
    <lineage>
        <taxon>Eukaryota</taxon>
        <taxon>Viridiplantae</taxon>
        <taxon>Streptophyta</taxon>
        <taxon>Embryophyta</taxon>
        <taxon>Tracheophyta</taxon>
        <taxon>Spermatophyta</taxon>
        <taxon>Magnoliopsida</taxon>
        <taxon>eudicotyledons</taxon>
        <taxon>Gunneridae</taxon>
        <taxon>Pentapetalae</taxon>
        <taxon>rosids</taxon>
        <taxon>malvids</taxon>
        <taxon>Brassicales</taxon>
        <taxon>Brassicaceae</taxon>
        <taxon>Camelineae</taxon>
        <taxon>Arabidopsis</taxon>
    </lineage>
</organism>
<reference key="1">
    <citation type="journal article" date="1999" name="Nature">
        <title>Sequence and analysis of chromosome 2 of the plant Arabidopsis thaliana.</title>
        <authorList>
            <person name="Lin X."/>
            <person name="Kaul S."/>
            <person name="Rounsley S.D."/>
            <person name="Shea T.P."/>
            <person name="Benito M.-I."/>
            <person name="Town C.D."/>
            <person name="Fujii C.Y."/>
            <person name="Mason T.M."/>
            <person name="Bowman C.L."/>
            <person name="Barnstead M.E."/>
            <person name="Feldblyum T.V."/>
            <person name="Buell C.R."/>
            <person name="Ketchum K.A."/>
            <person name="Lee J.J."/>
            <person name="Ronning C.M."/>
            <person name="Koo H.L."/>
            <person name="Moffat K.S."/>
            <person name="Cronin L.A."/>
            <person name="Shen M."/>
            <person name="Pai G."/>
            <person name="Van Aken S."/>
            <person name="Umayam L."/>
            <person name="Tallon L.J."/>
            <person name="Gill J.E."/>
            <person name="Adams M.D."/>
            <person name="Carrera A.J."/>
            <person name="Creasy T.H."/>
            <person name="Goodman H.M."/>
            <person name="Somerville C.R."/>
            <person name="Copenhaver G.P."/>
            <person name="Preuss D."/>
            <person name="Nierman W.C."/>
            <person name="White O."/>
            <person name="Eisen J.A."/>
            <person name="Salzberg S.L."/>
            <person name="Fraser C.M."/>
            <person name="Venter J.C."/>
        </authorList>
    </citation>
    <scope>NUCLEOTIDE SEQUENCE [LARGE SCALE GENOMIC DNA]</scope>
    <source>
        <strain>cv. Columbia</strain>
    </source>
</reference>
<reference key="2">
    <citation type="journal article" date="2017" name="Plant J.">
        <title>Araport11: a complete reannotation of the Arabidopsis thaliana reference genome.</title>
        <authorList>
            <person name="Cheng C.Y."/>
            <person name="Krishnakumar V."/>
            <person name="Chan A.P."/>
            <person name="Thibaud-Nissen F."/>
            <person name="Schobel S."/>
            <person name="Town C.D."/>
        </authorList>
    </citation>
    <scope>GENOME REANNOTATION</scope>
    <source>
        <strain>cv. Columbia</strain>
    </source>
</reference>
<reference key="3">
    <citation type="journal article" date="2003" name="Science">
        <title>Empirical analysis of transcriptional activity in the Arabidopsis genome.</title>
        <authorList>
            <person name="Yamada K."/>
            <person name="Lim J."/>
            <person name="Dale J.M."/>
            <person name="Chen H."/>
            <person name="Shinn P."/>
            <person name="Palm C.J."/>
            <person name="Southwick A.M."/>
            <person name="Wu H.C."/>
            <person name="Kim C.J."/>
            <person name="Nguyen M."/>
            <person name="Pham P.K."/>
            <person name="Cheuk R.F."/>
            <person name="Karlin-Newmann G."/>
            <person name="Liu S.X."/>
            <person name="Lam B."/>
            <person name="Sakano H."/>
            <person name="Wu T."/>
            <person name="Yu G."/>
            <person name="Miranda M."/>
            <person name="Quach H.L."/>
            <person name="Tripp M."/>
            <person name="Chang C.H."/>
            <person name="Lee J.M."/>
            <person name="Toriumi M.J."/>
            <person name="Chan M.M."/>
            <person name="Tang C.C."/>
            <person name="Onodera C.S."/>
            <person name="Deng J.M."/>
            <person name="Akiyama K."/>
            <person name="Ansari Y."/>
            <person name="Arakawa T."/>
            <person name="Banh J."/>
            <person name="Banno F."/>
            <person name="Bowser L."/>
            <person name="Brooks S.Y."/>
            <person name="Carninci P."/>
            <person name="Chao Q."/>
            <person name="Choy N."/>
            <person name="Enju A."/>
            <person name="Goldsmith A.D."/>
            <person name="Gurjal M."/>
            <person name="Hansen N.F."/>
            <person name="Hayashizaki Y."/>
            <person name="Johnson-Hopson C."/>
            <person name="Hsuan V.W."/>
            <person name="Iida K."/>
            <person name="Karnes M."/>
            <person name="Khan S."/>
            <person name="Koesema E."/>
            <person name="Ishida J."/>
            <person name="Jiang P.X."/>
            <person name="Jones T."/>
            <person name="Kawai J."/>
            <person name="Kamiya A."/>
            <person name="Meyers C."/>
            <person name="Nakajima M."/>
            <person name="Narusaka M."/>
            <person name="Seki M."/>
            <person name="Sakurai T."/>
            <person name="Satou M."/>
            <person name="Tamse R."/>
            <person name="Vaysberg M."/>
            <person name="Wallender E.K."/>
            <person name="Wong C."/>
            <person name="Yamamura Y."/>
            <person name="Yuan S."/>
            <person name="Shinozaki K."/>
            <person name="Davis R.W."/>
            <person name="Theologis A."/>
            <person name="Ecker J.R."/>
        </authorList>
    </citation>
    <scope>NUCLEOTIDE SEQUENCE [LARGE SCALE MRNA]</scope>
    <source>
        <strain>cv. Columbia</strain>
    </source>
</reference>
<reference key="4">
    <citation type="journal article" date="2008" name="Plant J.">
        <title>Vein patterning screens and the defectively organized tributaries mutants in Arabidopsis thaliana.</title>
        <authorList>
            <person name="Petricka J.J."/>
            <person name="Clay N.K."/>
            <person name="Nelson T.M."/>
        </authorList>
    </citation>
    <scope>FUNCTION</scope>
    <scope>TISSUE SPECIFICITY</scope>
    <scope>DISRUPTION PHENOTYPE</scope>
</reference>
<keyword id="KW-1185">Reference proteome</keyword>
<keyword id="KW-0964">Secreted</keyword>
<keyword id="KW-0732">Signal</keyword>
<proteinExistence type="evidence at transcript level"/>
<sequence length="255" mass="19993">MANHKNLFFLCFLIGLGLCSARRALLSSSESEAEVAAYGVNSGLSAGLGVGIGGGPGGGSGYGGGSGEGGGAGGHGEGHIGGGGGGGHGGGAGGGGGGGPGGGYGGGSGEGGGAGYGGGEAGGHGGGGGGGAGGGGGGGGGAHGGGYGGGQGAGAGGGYGGGGAGGHGGGGGGGNGGGGGGGSGEGGAHGGGYGAGGGAGEGYGGGAGAGGHGGGGGGGGGSGGGGGGGGGYAAASGYGHGGGAGGGEGSGGYVP</sequence>
<gene>
    <name evidence="4" type="primary">DOT1</name>
    <name evidence="6" type="ordered locus">At2g36120</name>
</gene>
<evidence type="ECO:0000255" key="1"/>
<evidence type="ECO:0000256" key="2">
    <source>
        <dbReference type="SAM" id="MobiDB-lite"/>
    </source>
</evidence>
<evidence type="ECO:0000269" key="3">
    <source>
    </source>
</evidence>
<evidence type="ECO:0000303" key="4">
    <source>
    </source>
</evidence>
<evidence type="ECO:0000305" key="5"/>
<evidence type="ECO:0000312" key="6">
    <source>
        <dbReference type="Araport" id="AT2G36120"/>
    </source>
</evidence>
<feature type="signal peptide" evidence="1">
    <location>
        <begin position="1"/>
        <end position="21"/>
    </location>
</feature>
<feature type="chain" id="PRO_0000431314" description="Glycine-rich protein DOT1" evidence="1">
    <location>
        <begin position="22"/>
        <end position="255"/>
    </location>
</feature>
<feature type="region of interest" description="Disordered" evidence="2">
    <location>
        <begin position="63"/>
        <end position="88"/>
    </location>
</feature>
<protein>
    <recommendedName>
        <fullName evidence="5">Glycine-rich protein DOT1</fullName>
    </recommendedName>
    <alternativeName>
        <fullName evidence="4">Protein DEFECTIVELY ORGANIZED TRIBUTARIES 1</fullName>
    </alternativeName>
</protein>
<name>DOT1_ARATH</name>
<accession>Q9SIH2</accession>
<dbReference type="EMBL" id="AC007135">
    <property type="protein sequence ID" value="AAD26969.1"/>
    <property type="molecule type" value="Genomic_DNA"/>
</dbReference>
<dbReference type="EMBL" id="CP002685">
    <property type="protein sequence ID" value="AEC09208.1"/>
    <property type="molecule type" value="Genomic_DNA"/>
</dbReference>
<dbReference type="EMBL" id="AY136328">
    <property type="protein sequence ID" value="AAM96994.1"/>
    <property type="molecule type" value="mRNA"/>
</dbReference>
<dbReference type="EMBL" id="BT000113">
    <property type="protein sequence ID" value="AAN15432.1"/>
    <property type="molecule type" value="mRNA"/>
</dbReference>
<dbReference type="PIR" id="B84777">
    <property type="entry name" value="B84777"/>
</dbReference>
<dbReference type="RefSeq" id="NP_181156.1">
    <property type="nucleotide sequence ID" value="NM_129171.4"/>
</dbReference>
<dbReference type="STRING" id="3702.Q9SIH2"/>
<dbReference type="PaxDb" id="3702-AT2G36120.1"/>
<dbReference type="EnsemblPlants" id="AT2G36120.1">
    <property type="protein sequence ID" value="AT2G36120.1"/>
    <property type="gene ID" value="AT2G36120"/>
</dbReference>
<dbReference type="GeneID" id="3768574"/>
<dbReference type="Gramene" id="AT2G36120.1">
    <property type="protein sequence ID" value="AT2G36120.1"/>
    <property type="gene ID" value="AT2G36120"/>
</dbReference>
<dbReference type="KEGG" id="ath:AT2G36120"/>
<dbReference type="Araport" id="AT2G36120"/>
<dbReference type="TAIR" id="AT2G36120">
    <property type="gene designation" value="DOT1"/>
</dbReference>
<dbReference type="eggNOG" id="ENOG502QU0K">
    <property type="taxonomic scope" value="Eukaryota"/>
</dbReference>
<dbReference type="HOGENOM" id="CLU_1091263_0_0_1"/>
<dbReference type="InParanoid" id="Q9SIH2"/>
<dbReference type="OMA" id="YPAIGHG"/>
<dbReference type="PRO" id="PR:Q9SIH2"/>
<dbReference type="Proteomes" id="UP000006548">
    <property type="component" value="Chromosome 2"/>
</dbReference>
<dbReference type="ExpressionAtlas" id="Q9SIH2">
    <property type="expression patterns" value="baseline and differential"/>
</dbReference>
<dbReference type="GO" id="GO:0005576">
    <property type="term" value="C:extracellular region"/>
    <property type="evidence" value="ECO:0007669"/>
    <property type="project" value="UniProtKB-SubCell"/>
</dbReference>
<dbReference type="GO" id="GO:0010588">
    <property type="term" value="P:cotyledon vascular tissue pattern formation"/>
    <property type="evidence" value="ECO:0000315"/>
    <property type="project" value="TAIR"/>
</dbReference>
<dbReference type="GO" id="GO:0048366">
    <property type="term" value="P:leaf development"/>
    <property type="evidence" value="ECO:0000315"/>
    <property type="project" value="TAIR"/>
</dbReference>
<dbReference type="GO" id="GO:0010305">
    <property type="term" value="P:leaf vascular tissue pattern formation"/>
    <property type="evidence" value="ECO:0000315"/>
    <property type="project" value="TAIR"/>
</dbReference>
<dbReference type="GO" id="GO:0010087">
    <property type="term" value="P:phloem or xylem histogenesis"/>
    <property type="evidence" value="ECO:0000315"/>
    <property type="project" value="TAIR"/>
</dbReference>
<dbReference type="PRINTS" id="PR01228">
    <property type="entry name" value="EGGSHELL"/>
</dbReference>